<accession>Q89NW6</accession>
<dbReference type="EC" id="2.8.1.8" evidence="1"/>
<dbReference type="EMBL" id="BA000040">
    <property type="protein sequence ID" value="BAC48982.1"/>
    <property type="molecule type" value="Genomic_DNA"/>
</dbReference>
<dbReference type="RefSeq" id="NP_770357.1">
    <property type="nucleotide sequence ID" value="NC_004463.1"/>
</dbReference>
<dbReference type="RefSeq" id="WP_011086498.1">
    <property type="nucleotide sequence ID" value="NC_004463.1"/>
</dbReference>
<dbReference type="SMR" id="Q89NW6"/>
<dbReference type="FunCoup" id="Q89NW6">
    <property type="interactions" value="715"/>
</dbReference>
<dbReference type="STRING" id="224911.AAV28_15565"/>
<dbReference type="EnsemblBacteria" id="BAC48982">
    <property type="protein sequence ID" value="BAC48982"/>
    <property type="gene ID" value="BAC48982"/>
</dbReference>
<dbReference type="GeneID" id="46490723"/>
<dbReference type="KEGG" id="bja:bll3717"/>
<dbReference type="PATRIC" id="fig|224911.44.peg.3381"/>
<dbReference type="eggNOG" id="COG0320">
    <property type="taxonomic scope" value="Bacteria"/>
</dbReference>
<dbReference type="HOGENOM" id="CLU_033144_2_1_5"/>
<dbReference type="InParanoid" id="Q89NW6"/>
<dbReference type="OrthoDB" id="9787898at2"/>
<dbReference type="PhylomeDB" id="Q89NW6"/>
<dbReference type="UniPathway" id="UPA00538">
    <property type="reaction ID" value="UER00593"/>
</dbReference>
<dbReference type="Proteomes" id="UP000002526">
    <property type="component" value="Chromosome"/>
</dbReference>
<dbReference type="GO" id="GO:0005737">
    <property type="term" value="C:cytoplasm"/>
    <property type="evidence" value="ECO:0007669"/>
    <property type="project" value="UniProtKB-SubCell"/>
</dbReference>
<dbReference type="GO" id="GO:0051539">
    <property type="term" value="F:4 iron, 4 sulfur cluster binding"/>
    <property type="evidence" value="ECO:0007669"/>
    <property type="project" value="UniProtKB-UniRule"/>
</dbReference>
<dbReference type="GO" id="GO:0016992">
    <property type="term" value="F:lipoate synthase activity"/>
    <property type="evidence" value="ECO:0007669"/>
    <property type="project" value="UniProtKB-UniRule"/>
</dbReference>
<dbReference type="GO" id="GO:0046872">
    <property type="term" value="F:metal ion binding"/>
    <property type="evidence" value="ECO:0007669"/>
    <property type="project" value="UniProtKB-KW"/>
</dbReference>
<dbReference type="FunFam" id="3.20.20.70:FF:000186">
    <property type="entry name" value="Lipoyl synthase"/>
    <property type="match status" value="1"/>
</dbReference>
<dbReference type="Gene3D" id="3.20.20.70">
    <property type="entry name" value="Aldolase class I"/>
    <property type="match status" value="1"/>
</dbReference>
<dbReference type="HAMAP" id="MF_00206">
    <property type="entry name" value="Lipoyl_synth"/>
    <property type="match status" value="1"/>
</dbReference>
<dbReference type="InterPro" id="IPR013785">
    <property type="entry name" value="Aldolase_TIM"/>
</dbReference>
<dbReference type="InterPro" id="IPR006638">
    <property type="entry name" value="Elp3/MiaA/NifB-like_rSAM"/>
</dbReference>
<dbReference type="InterPro" id="IPR003698">
    <property type="entry name" value="Lipoyl_synth"/>
</dbReference>
<dbReference type="InterPro" id="IPR007197">
    <property type="entry name" value="rSAM"/>
</dbReference>
<dbReference type="NCBIfam" id="TIGR00510">
    <property type="entry name" value="lipA"/>
    <property type="match status" value="1"/>
</dbReference>
<dbReference type="NCBIfam" id="NF004019">
    <property type="entry name" value="PRK05481.1"/>
    <property type="match status" value="1"/>
</dbReference>
<dbReference type="NCBIfam" id="NF009544">
    <property type="entry name" value="PRK12928.1"/>
    <property type="match status" value="1"/>
</dbReference>
<dbReference type="PANTHER" id="PTHR10949">
    <property type="entry name" value="LIPOYL SYNTHASE"/>
    <property type="match status" value="1"/>
</dbReference>
<dbReference type="PANTHER" id="PTHR10949:SF0">
    <property type="entry name" value="LIPOYL SYNTHASE, MITOCHONDRIAL"/>
    <property type="match status" value="1"/>
</dbReference>
<dbReference type="Pfam" id="PF04055">
    <property type="entry name" value="Radical_SAM"/>
    <property type="match status" value="1"/>
</dbReference>
<dbReference type="PIRSF" id="PIRSF005963">
    <property type="entry name" value="Lipoyl_synth"/>
    <property type="match status" value="1"/>
</dbReference>
<dbReference type="SFLD" id="SFLDF00271">
    <property type="entry name" value="lipoyl_synthase"/>
    <property type="match status" value="1"/>
</dbReference>
<dbReference type="SFLD" id="SFLDS00029">
    <property type="entry name" value="Radical_SAM"/>
    <property type="match status" value="1"/>
</dbReference>
<dbReference type="SMART" id="SM00729">
    <property type="entry name" value="Elp3"/>
    <property type="match status" value="1"/>
</dbReference>
<dbReference type="SUPFAM" id="SSF102114">
    <property type="entry name" value="Radical SAM enzymes"/>
    <property type="match status" value="1"/>
</dbReference>
<dbReference type="PROSITE" id="PS51918">
    <property type="entry name" value="RADICAL_SAM"/>
    <property type="match status" value="1"/>
</dbReference>
<sequence length="322" mass="35885">MKVILDLLNNDPRTTQRTERPRHPEKANRPDTPMESRPAWIRVKAPGSAQWTETQRIVRENKLVTVCEEASCPNIGECWAKKHATFMIMGDTCTRACAFCNVRTGLPGPLDADEPGKVADAVAKLGLEHVVVTSVDRDDLADGGAAHFAATIAAIRAMSPATSIEILTPDFLRKHGALETVVAARPDVLNHNLETVPSKYLAVRPGARYFHSVRLLQRAKELDPRIFTKSGIMVGLGEDRSEVLQLMDDLRSADVDFLTIGQYLQPTRKHHAVMRFVPPDEFEAYEKTAYAKGFLMVSATPLTRSSHHAGDDFRKLRERRRA</sequence>
<evidence type="ECO:0000255" key="1">
    <source>
        <dbReference type="HAMAP-Rule" id="MF_00206"/>
    </source>
</evidence>
<evidence type="ECO:0000255" key="2">
    <source>
        <dbReference type="PROSITE-ProRule" id="PRU01266"/>
    </source>
</evidence>
<evidence type="ECO:0000256" key="3">
    <source>
        <dbReference type="SAM" id="MobiDB-lite"/>
    </source>
</evidence>
<organism>
    <name type="scientific">Bradyrhizobium diazoefficiens (strain JCM 10833 / BCRC 13528 / IAM 13628 / NBRC 14792 / USDA 110)</name>
    <dbReference type="NCBI Taxonomy" id="224911"/>
    <lineage>
        <taxon>Bacteria</taxon>
        <taxon>Pseudomonadati</taxon>
        <taxon>Pseudomonadota</taxon>
        <taxon>Alphaproteobacteria</taxon>
        <taxon>Hyphomicrobiales</taxon>
        <taxon>Nitrobacteraceae</taxon>
        <taxon>Bradyrhizobium</taxon>
    </lineage>
</organism>
<keyword id="KW-0004">4Fe-4S</keyword>
<keyword id="KW-0963">Cytoplasm</keyword>
<keyword id="KW-0408">Iron</keyword>
<keyword id="KW-0411">Iron-sulfur</keyword>
<keyword id="KW-0479">Metal-binding</keyword>
<keyword id="KW-1185">Reference proteome</keyword>
<keyword id="KW-0949">S-adenosyl-L-methionine</keyword>
<keyword id="KW-0808">Transferase</keyword>
<comment type="function">
    <text evidence="1">Catalyzes the radical-mediated insertion of two sulfur atoms into the C-6 and C-8 positions of the octanoyl moiety bound to the lipoyl domains of lipoate-dependent enzymes, thereby converting the octanoylated domains into lipoylated derivatives.</text>
</comment>
<comment type="catalytic activity">
    <reaction evidence="1">
        <text>[[Fe-S] cluster scaffold protein carrying a second [4Fe-4S](2+) cluster] + N(6)-octanoyl-L-lysyl-[protein] + 2 oxidized [2Fe-2S]-[ferredoxin] + 2 S-adenosyl-L-methionine + 4 H(+) = [[Fe-S] cluster scaffold protein] + N(6)-[(R)-dihydrolipoyl]-L-lysyl-[protein] + 4 Fe(3+) + 2 hydrogen sulfide + 2 5'-deoxyadenosine + 2 L-methionine + 2 reduced [2Fe-2S]-[ferredoxin]</text>
        <dbReference type="Rhea" id="RHEA:16585"/>
        <dbReference type="Rhea" id="RHEA-COMP:9928"/>
        <dbReference type="Rhea" id="RHEA-COMP:10000"/>
        <dbReference type="Rhea" id="RHEA-COMP:10001"/>
        <dbReference type="Rhea" id="RHEA-COMP:10475"/>
        <dbReference type="Rhea" id="RHEA-COMP:14568"/>
        <dbReference type="Rhea" id="RHEA-COMP:14569"/>
        <dbReference type="ChEBI" id="CHEBI:15378"/>
        <dbReference type="ChEBI" id="CHEBI:17319"/>
        <dbReference type="ChEBI" id="CHEBI:29034"/>
        <dbReference type="ChEBI" id="CHEBI:29919"/>
        <dbReference type="ChEBI" id="CHEBI:33722"/>
        <dbReference type="ChEBI" id="CHEBI:33737"/>
        <dbReference type="ChEBI" id="CHEBI:33738"/>
        <dbReference type="ChEBI" id="CHEBI:57844"/>
        <dbReference type="ChEBI" id="CHEBI:59789"/>
        <dbReference type="ChEBI" id="CHEBI:78809"/>
        <dbReference type="ChEBI" id="CHEBI:83100"/>
        <dbReference type="EC" id="2.8.1.8"/>
    </reaction>
</comment>
<comment type="cofactor">
    <cofactor evidence="1">
        <name>[4Fe-4S] cluster</name>
        <dbReference type="ChEBI" id="CHEBI:49883"/>
    </cofactor>
    <text evidence="1">Binds 2 [4Fe-4S] clusters per subunit. One cluster is coordinated with 3 cysteines and an exchangeable S-adenosyl-L-methionine.</text>
</comment>
<comment type="pathway">
    <text evidence="1">Protein modification; protein lipoylation via endogenous pathway; protein N(6)-(lipoyl)lysine from octanoyl-[acyl-carrier-protein]: step 2/2.</text>
</comment>
<comment type="subcellular location">
    <subcellularLocation>
        <location evidence="1">Cytoplasm</location>
    </subcellularLocation>
</comment>
<comment type="similarity">
    <text evidence="1">Belongs to the radical SAM superfamily. Lipoyl synthase family.</text>
</comment>
<reference key="1">
    <citation type="journal article" date="2002" name="DNA Res.">
        <title>Complete genomic sequence of nitrogen-fixing symbiotic bacterium Bradyrhizobium japonicum USDA110.</title>
        <authorList>
            <person name="Kaneko T."/>
            <person name="Nakamura Y."/>
            <person name="Sato S."/>
            <person name="Minamisawa K."/>
            <person name="Uchiumi T."/>
            <person name="Sasamoto S."/>
            <person name="Watanabe A."/>
            <person name="Idesawa K."/>
            <person name="Iriguchi M."/>
            <person name="Kawashima K."/>
            <person name="Kohara M."/>
            <person name="Matsumoto M."/>
            <person name="Shimpo S."/>
            <person name="Tsuruoka H."/>
            <person name="Wada T."/>
            <person name="Yamada M."/>
            <person name="Tabata S."/>
        </authorList>
    </citation>
    <scope>NUCLEOTIDE SEQUENCE [LARGE SCALE GENOMIC DNA]</scope>
    <source>
        <strain>JCM 10833 / BCRC 13528 / IAM 13628 / NBRC 14792 / USDA 110</strain>
    </source>
</reference>
<feature type="chain" id="PRO_0000102294" description="Lipoyl synthase 2">
    <location>
        <begin position="1"/>
        <end position="322"/>
    </location>
</feature>
<feature type="domain" description="Radical SAM core" evidence="2">
    <location>
        <begin position="79"/>
        <end position="295"/>
    </location>
</feature>
<feature type="region of interest" description="Disordered" evidence="3">
    <location>
        <begin position="1"/>
        <end position="36"/>
    </location>
</feature>
<feature type="compositionally biased region" description="Basic and acidic residues" evidence="3">
    <location>
        <begin position="14"/>
        <end position="34"/>
    </location>
</feature>
<feature type="binding site" evidence="1">
    <location>
        <position position="67"/>
    </location>
    <ligand>
        <name>[4Fe-4S] cluster</name>
        <dbReference type="ChEBI" id="CHEBI:49883"/>
        <label>1</label>
    </ligand>
</feature>
<feature type="binding site" evidence="1">
    <location>
        <position position="72"/>
    </location>
    <ligand>
        <name>[4Fe-4S] cluster</name>
        <dbReference type="ChEBI" id="CHEBI:49883"/>
        <label>1</label>
    </ligand>
</feature>
<feature type="binding site" evidence="1">
    <location>
        <position position="78"/>
    </location>
    <ligand>
        <name>[4Fe-4S] cluster</name>
        <dbReference type="ChEBI" id="CHEBI:49883"/>
        <label>1</label>
    </ligand>
</feature>
<feature type="binding site" evidence="1">
    <location>
        <position position="93"/>
    </location>
    <ligand>
        <name>[4Fe-4S] cluster</name>
        <dbReference type="ChEBI" id="CHEBI:49883"/>
        <label>2</label>
        <note>4Fe-4S-S-AdoMet</note>
    </ligand>
</feature>
<feature type="binding site" evidence="1">
    <location>
        <position position="97"/>
    </location>
    <ligand>
        <name>[4Fe-4S] cluster</name>
        <dbReference type="ChEBI" id="CHEBI:49883"/>
        <label>2</label>
        <note>4Fe-4S-S-AdoMet</note>
    </ligand>
</feature>
<feature type="binding site" evidence="1">
    <location>
        <position position="100"/>
    </location>
    <ligand>
        <name>[4Fe-4S] cluster</name>
        <dbReference type="ChEBI" id="CHEBI:49883"/>
        <label>2</label>
        <note>4Fe-4S-S-AdoMet</note>
    </ligand>
</feature>
<feature type="binding site" evidence="1">
    <location>
        <position position="306"/>
    </location>
    <ligand>
        <name>[4Fe-4S] cluster</name>
        <dbReference type="ChEBI" id="CHEBI:49883"/>
        <label>1</label>
    </ligand>
</feature>
<gene>
    <name evidence="1" type="primary">lipA2</name>
    <name type="synonym">lipA</name>
    <name type="ordered locus">bll3717</name>
</gene>
<proteinExistence type="inferred from homology"/>
<protein>
    <recommendedName>
        <fullName evidence="1">Lipoyl synthase 2</fullName>
        <ecNumber evidence="1">2.8.1.8</ecNumber>
    </recommendedName>
    <alternativeName>
        <fullName evidence="1">Lip-syn 2</fullName>
        <shortName evidence="1">LS 2</shortName>
    </alternativeName>
    <alternativeName>
        <fullName evidence="1">Lipoate synthase 2</fullName>
    </alternativeName>
    <alternativeName>
        <fullName evidence="1">Lipoic acid synthase 2</fullName>
    </alternativeName>
    <alternativeName>
        <fullName evidence="1">Sulfur insertion protein LipA 2</fullName>
    </alternativeName>
</protein>
<name>LIPA2_BRADU</name>